<name>CC85A_MOUSE</name>
<proteinExistence type="evidence at protein level"/>
<accession>Q5SP85</accession>
<accession>Q69Z68</accession>
<accession>Q6NZL9</accession>
<accession>Q8BGZ5</accession>
<accession>Q8BLC5</accession>
<accession>Q8VCC5</accession>
<protein>
    <recommendedName>
        <fullName>Coiled-coil domain-containing protein 85A</fullName>
    </recommendedName>
</protein>
<reference key="1">
    <citation type="journal article" date="2004" name="DNA Res.">
        <title>Prediction of the coding sequences of mouse homologues of KIAA gene: IV. The complete nucleotide sequences of 500 mouse KIAA-homologous cDNAs identified by screening of terminal sequences of cDNA clones randomly sampled from size-fractionated libraries.</title>
        <authorList>
            <person name="Okazaki N."/>
            <person name="Kikuno R."/>
            <person name="Ohara R."/>
            <person name="Inamoto S."/>
            <person name="Koseki H."/>
            <person name="Hiraoka S."/>
            <person name="Saga Y."/>
            <person name="Seino S."/>
            <person name="Nishimura M."/>
            <person name="Kaisho T."/>
            <person name="Hoshino K."/>
            <person name="Kitamura H."/>
            <person name="Nagase T."/>
            <person name="Ohara O."/>
            <person name="Koga H."/>
        </authorList>
    </citation>
    <scope>NUCLEOTIDE SEQUENCE [LARGE SCALE MRNA] (ISOFORM 2)</scope>
    <source>
        <tissue>Fetal brain</tissue>
    </source>
</reference>
<reference key="2">
    <citation type="journal article" date="2005" name="Science">
        <title>The transcriptional landscape of the mammalian genome.</title>
        <authorList>
            <person name="Carninci P."/>
            <person name="Kasukawa T."/>
            <person name="Katayama S."/>
            <person name="Gough J."/>
            <person name="Frith M.C."/>
            <person name="Maeda N."/>
            <person name="Oyama R."/>
            <person name="Ravasi T."/>
            <person name="Lenhard B."/>
            <person name="Wells C."/>
            <person name="Kodzius R."/>
            <person name="Shimokawa K."/>
            <person name="Bajic V.B."/>
            <person name="Brenner S.E."/>
            <person name="Batalov S."/>
            <person name="Forrest A.R."/>
            <person name="Zavolan M."/>
            <person name="Davis M.J."/>
            <person name="Wilming L.G."/>
            <person name="Aidinis V."/>
            <person name="Allen J.E."/>
            <person name="Ambesi-Impiombato A."/>
            <person name="Apweiler R."/>
            <person name="Aturaliya R.N."/>
            <person name="Bailey T.L."/>
            <person name="Bansal M."/>
            <person name="Baxter L."/>
            <person name="Beisel K.W."/>
            <person name="Bersano T."/>
            <person name="Bono H."/>
            <person name="Chalk A.M."/>
            <person name="Chiu K.P."/>
            <person name="Choudhary V."/>
            <person name="Christoffels A."/>
            <person name="Clutterbuck D.R."/>
            <person name="Crowe M.L."/>
            <person name="Dalla E."/>
            <person name="Dalrymple B.P."/>
            <person name="de Bono B."/>
            <person name="Della Gatta G."/>
            <person name="di Bernardo D."/>
            <person name="Down T."/>
            <person name="Engstrom P."/>
            <person name="Fagiolini M."/>
            <person name="Faulkner G."/>
            <person name="Fletcher C.F."/>
            <person name="Fukushima T."/>
            <person name="Furuno M."/>
            <person name="Futaki S."/>
            <person name="Gariboldi M."/>
            <person name="Georgii-Hemming P."/>
            <person name="Gingeras T.R."/>
            <person name="Gojobori T."/>
            <person name="Green R.E."/>
            <person name="Gustincich S."/>
            <person name="Harbers M."/>
            <person name="Hayashi Y."/>
            <person name="Hensch T.K."/>
            <person name="Hirokawa N."/>
            <person name="Hill D."/>
            <person name="Huminiecki L."/>
            <person name="Iacono M."/>
            <person name="Ikeo K."/>
            <person name="Iwama A."/>
            <person name="Ishikawa T."/>
            <person name="Jakt M."/>
            <person name="Kanapin A."/>
            <person name="Katoh M."/>
            <person name="Kawasawa Y."/>
            <person name="Kelso J."/>
            <person name="Kitamura H."/>
            <person name="Kitano H."/>
            <person name="Kollias G."/>
            <person name="Krishnan S.P."/>
            <person name="Kruger A."/>
            <person name="Kummerfeld S.K."/>
            <person name="Kurochkin I.V."/>
            <person name="Lareau L.F."/>
            <person name="Lazarevic D."/>
            <person name="Lipovich L."/>
            <person name="Liu J."/>
            <person name="Liuni S."/>
            <person name="McWilliam S."/>
            <person name="Madan Babu M."/>
            <person name="Madera M."/>
            <person name="Marchionni L."/>
            <person name="Matsuda H."/>
            <person name="Matsuzawa S."/>
            <person name="Miki H."/>
            <person name="Mignone F."/>
            <person name="Miyake S."/>
            <person name="Morris K."/>
            <person name="Mottagui-Tabar S."/>
            <person name="Mulder N."/>
            <person name="Nakano N."/>
            <person name="Nakauchi H."/>
            <person name="Ng P."/>
            <person name="Nilsson R."/>
            <person name="Nishiguchi S."/>
            <person name="Nishikawa S."/>
            <person name="Nori F."/>
            <person name="Ohara O."/>
            <person name="Okazaki Y."/>
            <person name="Orlando V."/>
            <person name="Pang K.C."/>
            <person name="Pavan W.J."/>
            <person name="Pavesi G."/>
            <person name="Pesole G."/>
            <person name="Petrovsky N."/>
            <person name="Piazza S."/>
            <person name="Reed J."/>
            <person name="Reid J.F."/>
            <person name="Ring B.Z."/>
            <person name="Ringwald M."/>
            <person name="Rost B."/>
            <person name="Ruan Y."/>
            <person name="Salzberg S.L."/>
            <person name="Sandelin A."/>
            <person name="Schneider C."/>
            <person name="Schoenbach C."/>
            <person name="Sekiguchi K."/>
            <person name="Semple C.A."/>
            <person name="Seno S."/>
            <person name="Sessa L."/>
            <person name="Sheng Y."/>
            <person name="Shibata Y."/>
            <person name="Shimada H."/>
            <person name="Shimada K."/>
            <person name="Silva D."/>
            <person name="Sinclair B."/>
            <person name="Sperling S."/>
            <person name="Stupka E."/>
            <person name="Sugiura K."/>
            <person name="Sultana R."/>
            <person name="Takenaka Y."/>
            <person name="Taki K."/>
            <person name="Tammoja K."/>
            <person name="Tan S.L."/>
            <person name="Tang S."/>
            <person name="Taylor M.S."/>
            <person name="Tegner J."/>
            <person name="Teichmann S.A."/>
            <person name="Ueda H.R."/>
            <person name="van Nimwegen E."/>
            <person name="Verardo R."/>
            <person name="Wei C.L."/>
            <person name="Yagi K."/>
            <person name="Yamanishi H."/>
            <person name="Zabarovsky E."/>
            <person name="Zhu S."/>
            <person name="Zimmer A."/>
            <person name="Hide W."/>
            <person name="Bult C."/>
            <person name="Grimmond S.M."/>
            <person name="Teasdale R.D."/>
            <person name="Liu E.T."/>
            <person name="Brusic V."/>
            <person name="Quackenbush J."/>
            <person name="Wahlestedt C."/>
            <person name="Mattick J.S."/>
            <person name="Hume D.A."/>
            <person name="Kai C."/>
            <person name="Sasaki D."/>
            <person name="Tomaru Y."/>
            <person name="Fukuda S."/>
            <person name="Kanamori-Katayama M."/>
            <person name="Suzuki M."/>
            <person name="Aoki J."/>
            <person name="Arakawa T."/>
            <person name="Iida J."/>
            <person name="Imamura K."/>
            <person name="Itoh M."/>
            <person name="Kato T."/>
            <person name="Kawaji H."/>
            <person name="Kawagashira N."/>
            <person name="Kawashima T."/>
            <person name="Kojima M."/>
            <person name="Kondo S."/>
            <person name="Konno H."/>
            <person name="Nakano K."/>
            <person name="Ninomiya N."/>
            <person name="Nishio T."/>
            <person name="Okada M."/>
            <person name="Plessy C."/>
            <person name="Shibata K."/>
            <person name="Shiraki T."/>
            <person name="Suzuki S."/>
            <person name="Tagami M."/>
            <person name="Waki K."/>
            <person name="Watahiki A."/>
            <person name="Okamura-Oho Y."/>
            <person name="Suzuki H."/>
            <person name="Kawai J."/>
            <person name="Hayashizaki Y."/>
        </authorList>
    </citation>
    <scope>NUCLEOTIDE SEQUENCE [LARGE SCALE MRNA] (ISOFORM 1)</scope>
    <source>
        <strain>C57BL/6J</strain>
        <tissue>Corpora quadrigemina</tissue>
        <tissue>Lung</tissue>
    </source>
</reference>
<reference key="3">
    <citation type="journal article" date="2009" name="PLoS Biol.">
        <title>Lineage-specific biology revealed by a finished genome assembly of the mouse.</title>
        <authorList>
            <person name="Church D.M."/>
            <person name="Goodstadt L."/>
            <person name="Hillier L.W."/>
            <person name="Zody M.C."/>
            <person name="Goldstein S."/>
            <person name="She X."/>
            <person name="Bult C.J."/>
            <person name="Agarwala R."/>
            <person name="Cherry J.L."/>
            <person name="DiCuccio M."/>
            <person name="Hlavina W."/>
            <person name="Kapustin Y."/>
            <person name="Meric P."/>
            <person name="Maglott D."/>
            <person name="Birtle Z."/>
            <person name="Marques A.C."/>
            <person name="Graves T."/>
            <person name="Zhou S."/>
            <person name="Teague B."/>
            <person name="Potamousis K."/>
            <person name="Churas C."/>
            <person name="Place M."/>
            <person name="Herschleb J."/>
            <person name="Runnheim R."/>
            <person name="Forrest D."/>
            <person name="Amos-Landgraf J."/>
            <person name="Schwartz D.C."/>
            <person name="Cheng Z."/>
            <person name="Lindblad-Toh K."/>
            <person name="Eichler E.E."/>
            <person name="Ponting C.P."/>
        </authorList>
    </citation>
    <scope>NUCLEOTIDE SEQUENCE [LARGE SCALE GENOMIC DNA]</scope>
    <source>
        <strain>C57BL/6J</strain>
    </source>
</reference>
<reference key="4">
    <citation type="journal article" date="2004" name="Genome Res.">
        <title>The status, quality, and expansion of the NIH full-length cDNA project: the Mammalian Gene Collection (MGC).</title>
        <authorList>
            <consortium name="The MGC Project Team"/>
        </authorList>
    </citation>
    <scope>NUCLEOTIDE SEQUENCE [LARGE SCALE MRNA] (ISOFORM 3)</scope>
    <scope>NUCLEOTIDE SEQUENCE [LARGE SCALE MRNA] OF 86-500 (ISOFORM 1)</scope>
    <source>
        <strain>C57BL/6J</strain>
        <strain>FVB/N</strain>
        <tissue>Brain</tissue>
        <tissue>Mammary gland</tissue>
    </source>
</reference>
<reference key="5">
    <citation type="journal article" date="2014" name="Mol. Cell. Proteomics">
        <title>Immunoaffinity enrichment and mass spectrometry analysis of protein methylation.</title>
        <authorList>
            <person name="Guo A."/>
            <person name="Gu H."/>
            <person name="Zhou J."/>
            <person name="Mulhern D."/>
            <person name="Wang Y."/>
            <person name="Lee K.A."/>
            <person name="Yang V."/>
            <person name="Aguiar M."/>
            <person name="Kornhauser J."/>
            <person name="Jia X."/>
            <person name="Ren J."/>
            <person name="Beausoleil S.A."/>
            <person name="Silva J.C."/>
            <person name="Vemulapalli V."/>
            <person name="Bedford M.T."/>
            <person name="Comb M.J."/>
        </authorList>
    </citation>
    <scope>METHYLATION [LARGE SCALE ANALYSIS] AT ARG-488</scope>
    <scope>IDENTIFICATION BY MASS SPECTROMETRY [LARGE SCALE ANALYSIS]</scope>
    <source>
        <tissue>Brain</tissue>
    </source>
</reference>
<feature type="chain" id="PRO_0000271105" description="Coiled-coil domain-containing protein 85A">
    <location>
        <begin position="1"/>
        <end position="500"/>
    </location>
</feature>
<feature type="region of interest" description="Disordered" evidence="3">
    <location>
        <begin position="1"/>
        <end position="30"/>
    </location>
</feature>
<feature type="region of interest" description="Disordered" evidence="3">
    <location>
        <begin position="200"/>
        <end position="405"/>
    </location>
</feature>
<feature type="region of interest" description="Disordered" evidence="3">
    <location>
        <begin position="426"/>
        <end position="465"/>
    </location>
</feature>
<feature type="coiled-coil region" evidence="2">
    <location>
        <begin position="38"/>
        <end position="104"/>
    </location>
</feature>
<feature type="coiled-coil region" evidence="2">
    <location>
        <begin position="132"/>
        <end position="171"/>
    </location>
</feature>
<feature type="coiled-coil region" evidence="2">
    <location>
        <begin position="404"/>
        <end position="429"/>
    </location>
</feature>
<feature type="compositionally biased region" description="Low complexity" evidence="3">
    <location>
        <begin position="1"/>
        <end position="23"/>
    </location>
</feature>
<feature type="compositionally biased region" description="Low complexity" evidence="3">
    <location>
        <begin position="204"/>
        <end position="215"/>
    </location>
</feature>
<feature type="compositionally biased region" description="Basic and acidic residues" evidence="3">
    <location>
        <begin position="231"/>
        <end position="254"/>
    </location>
</feature>
<feature type="compositionally biased region" description="Gly residues" evidence="3">
    <location>
        <begin position="372"/>
        <end position="381"/>
    </location>
</feature>
<feature type="compositionally biased region" description="Basic and acidic residues" evidence="3">
    <location>
        <begin position="383"/>
        <end position="395"/>
    </location>
</feature>
<feature type="compositionally biased region" description="Polar residues" evidence="3">
    <location>
        <begin position="434"/>
        <end position="463"/>
    </location>
</feature>
<feature type="modified residue" description="Asymmetric dimethylarginine" evidence="7">
    <location>
        <position position="488"/>
    </location>
</feature>
<feature type="splice variant" id="VSP_022280" description="In isoform 3." evidence="5">
    <location>
        <begin position="179"/>
        <end position="206"/>
    </location>
</feature>
<feature type="splice variant" id="VSP_022283" description="In isoform 2 and isoform 3." evidence="4 5">
    <location>
        <begin position="432"/>
        <end position="471"/>
    </location>
</feature>
<feature type="sequence conflict" description="In Ref. 2; BAC32419." evidence="6" ref="2">
    <original>K</original>
    <variation>E</variation>
    <location>
        <position position="161"/>
    </location>
</feature>
<keyword id="KW-0025">Alternative splicing</keyword>
<keyword id="KW-0965">Cell junction</keyword>
<keyword id="KW-0175">Coiled coil</keyword>
<keyword id="KW-0488">Methylation</keyword>
<keyword id="KW-1185">Reference proteome</keyword>
<organism>
    <name type="scientific">Mus musculus</name>
    <name type="common">Mouse</name>
    <dbReference type="NCBI Taxonomy" id="10090"/>
    <lineage>
        <taxon>Eukaryota</taxon>
        <taxon>Metazoa</taxon>
        <taxon>Chordata</taxon>
        <taxon>Craniata</taxon>
        <taxon>Vertebrata</taxon>
        <taxon>Euteleostomi</taxon>
        <taxon>Mammalia</taxon>
        <taxon>Eutheria</taxon>
        <taxon>Euarchontoglires</taxon>
        <taxon>Glires</taxon>
        <taxon>Rodentia</taxon>
        <taxon>Myomorpha</taxon>
        <taxon>Muroidea</taxon>
        <taxon>Muridae</taxon>
        <taxon>Murinae</taxon>
        <taxon>Mus</taxon>
        <taxon>Mus</taxon>
    </lineage>
</organism>
<comment type="function">
    <text evidence="1">May play a role in cell-cell adhesion and epithelium development through its interaction with proteins of the beta-catenin family.</text>
</comment>
<comment type="subunit">
    <text evidence="1">May interact with ARVCF; CTNND1; CTNND2 and PKP4.</text>
</comment>
<comment type="subcellular location">
    <subcellularLocation>
        <location evidence="1">Cell junction</location>
        <location evidence="1">Adherens junction</location>
    </subcellularLocation>
</comment>
<comment type="alternative products">
    <event type="alternative splicing"/>
    <isoform>
        <id>Q5SP85-1</id>
        <name>1</name>
        <sequence type="displayed"/>
    </isoform>
    <isoform>
        <id>Q5SP85-2</id>
        <name>2</name>
        <sequence type="described" ref="VSP_022283"/>
    </isoform>
    <isoform>
        <id>Q5SP85-3</id>
        <name>3</name>
        <sequence type="described" ref="VSP_022280 VSP_022283"/>
    </isoform>
</comment>
<comment type="similarity">
    <text evidence="6">Belongs to the CCDC85 family.</text>
</comment>
<comment type="sequence caution" evidence="6">
    <conflict type="miscellaneous discrepancy">
        <sequence resource="EMBL-CDS" id="BAC39790"/>
    </conflict>
    <text>Probable cloning artifact. May result from internal priming due to genomic poly-A tracts.</text>
</comment>
<comment type="sequence caution" evidence="6">
    <conflict type="miscellaneous discrepancy">
        <sequence resource="EMBL-CDS" id="BAC39795"/>
    </conflict>
    <text>Probable cloning artifact. May result from internal priming due to genomic poly-A tracts.</text>
</comment>
<comment type="sequence caution" evidence="6">
    <conflict type="erroneous initiation">
        <sequence resource="EMBL-CDS" id="BAD32576"/>
    </conflict>
</comment>
<gene>
    <name type="primary">Ccdc85a</name>
    <name type="synonym">Kiaa1912</name>
</gene>
<sequence length="500" mass="54483">MSKAAGGSAPAAESCPSAPAGASTPTGVDDLSKVTDEELLQWSKEELIRSLRRAEAEKVSAMLDHSNLIREVNRRLQLHLGEIRGLKDINQKLQEDNQELRDLCCFLDDDRQKGKRVSREWQRLGRYTAGVMHKEVALYLQKLKELEVKQEEVVKENMELKELCMLLDEEKGVGCAGSRCSIDSQASLCQLVASATPYVRDVGDGSSTSSTGSTDSPDHHKHHASGGSPEHLQKPRSEGSPEHTKHRSTSPEHLHKPRASGTPDHSKALKGPSPEHHKPLCKGSPEQQRHPHPGSSPEVLPKHVLSGSPEHFQKHRPGGSPEHTRHSGGSPEHLQKHALGGSLEHLPRARGTSPEHLKQHYGASPDHKHASGSGGSGGGSREGTLRRPAQEDSSSHHRNVYSGMNESTLSYVRQLEARVRQLEEENRMLPQGSFRLSSGADGNNSSLNSPASFSGHTTPSQQPEPVVHSLKVVWRKLGDAAGSCPGIRQHLSGNQYKGPM</sequence>
<dbReference type="EMBL" id="AK173298">
    <property type="protein sequence ID" value="BAD32576.1"/>
    <property type="status" value="ALT_INIT"/>
    <property type="molecule type" value="mRNA"/>
</dbReference>
<dbReference type="EMBL" id="AK045568">
    <property type="protein sequence ID" value="BAC32419.1"/>
    <property type="molecule type" value="mRNA"/>
</dbReference>
<dbReference type="EMBL" id="AK087049">
    <property type="protein sequence ID" value="BAC39790.1"/>
    <property type="status" value="ALT_SEQ"/>
    <property type="molecule type" value="mRNA"/>
</dbReference>
<dbReference type="EMBL" id="AK087070">
    <property type="protein sequence ID" value="BAC39795.1"/>
    <property type="status" value="ALT_SEQ"/>
    <property type="molecule type" value="mRNA"/>
</dbReference>
<dbReference type="EMBL" id="AL929280">
    <property type="status" value="NOT_ANNOTATED_CDS"/>
    <property type="molecule type" value="Genomic_DNA"/>
</dbReference>
<dbReference type="EMBL" id="BX255910">
    <property type="status" value="NOT_ANNOTATED_CDS"/>
    <property type="molecule type" value="Genomic_DNA"/>
</dbReference>
<dbReference type="EMBL" id="BC020949">
    <property type="protein sequence ID" value="AAH20949.1"/>
    <property type="molecule type" value="mRNA"/>
</dbReference>
<dbReference type="EMBL" id="BC066065">
    <property type="protein sequence ID" value="AAH66065.1"/>
    <property type="molecule type" value="mRNA"/>
</dbReference>
<dbReference type="CCDS" id="CCDS24489.1">
    <molecule id="Q5SP85-1"/>
</dbReference>
<dbReference type="CCDS" id="CCDS48760.1">
    <molecule id="Q5SP85-2"/>
</dbReference>
<dbReference type="RefSeq" id="NP_001160133.1">
    <molecule id="Q5SP85-2"/>
    <property type="nucleotide sequence ID" value="NM_001166661.3"/>
</dbReference>
<dbReference type="RefSeq" id="NP_853555.2">
    <molecule id="Q5SP85-1"/>
    <property type="nucleotide sequence ID" value="NM_181577.6"/>
</dbReference>
<dbReference type="SMR" id="Q5SP85"/>
<dbReference type="BioGRID" id="229765">
    <property type="interactions" value="1"/>
</dbReference>
<dbReference type="FunCoup" id="Q5SP85">
    <property type="interactions" value="55"/>
</dbReference>
<dbReference type="STRING" id="10090.ENSMUSP00000124972"/>
<dbReference type="iPTMnet" id="Q5SP85"/>
<dbReference type="PhosphoSitePlus" id="Q5SP85"/>
<dbReference type="PaxDb" id="10090-ENSMUSP00000090941"/>
<dbReference type="ProteomicsDB" id="265354">
    <molecule id="Q5SP85-1"/>
</dbReference>
<dbReference type="ProteomicsDB" id="265355">
    <molecule id="Q5SP85-2"/>
</dbReference>
<dbReference type="ProteomicsDB" id="265356">
    <molecule id="Q5SP85-3"/>
</dbReference>
<dbReference type="Antibodypedia" id="50392">
    <property type="antibodies" value="31 antibodies from 11 providers"/>
</dbReference>
<dbReference type="DNASU" id="216613"/>
<dbReference type="Ensembl" id="ENSMUST00000042534.15">
    <molecule id="Q5SP85-2"/>
    <property type="protein sequence ID" value="ENSMUSP00000044649.9"/>
    <property type="gene ID" value="ENSMUSG00000032878.18"/>
</dbReference>
<dbReference type="Ensembl" id="ENSMUST00000093253.10">
    <molecule id="Q5SP85-1"/>
    <property type="protein sequence ID" value="ENSMUSP00000090941.4"/>
    <property type="gene ID" value="ENSMUSG00000032878.18"/>
</dbReference>
<dbReference type="GeneID" id="216613"/>
<dbReference type="KEGG" id="mmu:216613"/>
<dbReference type="UCSC" id="uc007igk.3">
    <molecule id="Q5SP85-1"/>
    <property type="organism name" value="mouse"/>
</dbReference>
<dbReference type="UCSC" id="uc007igl.3">
    <molecule id="Q5SP85-2"/>
    <property type="organism name" value="mouse"/>
</dbReference>
<dbReference type="AGR" id="MGI:2445069"/>
<dbReference type="CTD" id="114800"/>
<dbReference type="MGI" id="MGI:2445069">
    <property type="gene designation" value="Ccdc85a"/>
</dbReference>
<dbReference type="VEuPathDB" id="HostDB:ENSMUSG00000032878"/>
<dbReference type="eggNOG" id="KOG3819">
    <property type="taxonomic scope" value="Eukaryota"/>
</dbReference>
<dbReference type="GeneTree" id="ENSGT00940000157361"/>
<dbReference type="HOGENOM" id="CLU_028762_1_1_1"/>
<dbReference type="InParanoid" id="Q5SP85"/>
<dbReference type="OMA" id="DGNVCSP"/>
<dbReference type="OrthoDB" id="10056395at2759"/>
<dbReference type="PhylomeDB" id="Q5SP85"/>
<dbReference type="TreeFam" id="TF320243"/>
<dbReference type="BioGRID-ORCS" id="216613">
    <property type="hits" value="6 hits in 78 CRISPR screens"/>
</dbReference>
<dbReference type="ChiTaRS" id="Ccdc85a">
    <property type="organism name" value="mouse"/>
</dbReference>
<dbReference type="PRO" id="PR:Q5SP85"/>
<dbReference type="Proteomes" id="UP000000589">
    <property type="component" value="Chromosome 11"/>
</dbReference>
<dbReference type="RNAct" id="Q5SP85">
    <property type="molecule type" value="protein"/>
</dbReference>
<dbReference type="Bgee" id="ENSMUSG00000032878">
    <property type="expression patterns" value="Expressed in dentate gyrus of hippocampal formation and 168 other cell types or tissues"/>
</dbReference>
<dbReference type="ExpressionAtlas" id="Q5SP85">
    <property type="expression patterns" value="baseline and differential"/>
</dbReference>
<dbReference type="GO" id="GO:0005912">
    <property type="term" value="C:adherens junction"/>
    <property type="evidence" value="ECO:0007669"/>
    <property type="project" value="UniProtKB-SubCell"/>
</dbReference>
<dbReference type="InterPro" id="IPR019359">
    <property type="entry name" value="CCDC85"/>
</dbReference>
<dbReference type="PANTHER" id="PTHR13546:SF13">
    <property type="entry name" value="COILED-COIL DOMAIN-CONTAINING PROTEIN 85A"/>
    <property type="match status" value="1"/>
</dbReference>
<dbReference type="PANTHER" id="PTHR13546">
    <property type="entry name" value="RE60986P"/>
    <property type="match status" value="1"/>
</dbReference>
<dbReference type="Pfam" id="PF10226">
    <property type="entry name" value="CCDC85"/>
    <property type="match status" value="1"/>
</dbReference>
<evidence type="ECO:0000250" key="1">
    <source>
        <dbReference type="UniProtKB" id="Q96PX6"/>
    </source>
</evidence>
<evidence type="ECO:0000255" key="2"/>
<evidence type="ECO:0000256" key="3">
    <source>
        <dbReference type="SAM" id="MobiDB-lite"/>
    </source>
</evidence>
<evidence type="ECO:0000303" key="4">
    <source>
    </source>
</evidence>
<evidence type="ECO:0000303" key="5">
    <source>
    </source>
</evidence>
<evidence type="ECO:0000305" key="6"/>
<evidence type="ECO:0007744" key="7">
    <source>
    </source>
</evidence>